<protein>
    <recommendedName>
        <fullName>Vacuolar protein sorting-associated protein 27</fullName>
    </recommendedName>
</protein>
<organism>
    <name type="scientific">Debaryomyces hansenii (strain ATCC 36239 / CBS 767 / BCRC 21394 / JCM 1990 / NBRC 0083 / IGC 2968)</name>
    <name type="common">Yeast</name>
    <name type="synonym">Torulaspora hansenii</name>
    <dbReference type="NCBI Taxonomy" id="284592"/>
    <lineage>
        <taxon>Eukaryota</taxon>
        <taxon>Fungi</taxon>
        <taxon>Dikarya</taxon>
        <taxon>Ascomycota</taxon>
        <taxon>Saccharomycotina</taxon>
        <taxon>Pichiomycetes</taxon>
        <taxon>Debaryomycetaceae</taxon>
        <taxon>Debaryomyces</taxon>
    </lineage>
</organism>
<proteinExistence type="inferred from homology"/>
<comment type="function">
    <text evidence="1">Component of the ESCRT-0 complex which is the sorting receptor for ubiquitinated cargo proteins at the multivesicular body (MVB) and recruits ESCRT-I to the MVB outer membrane.</text>
</comment>
<comment type="subunit">
    <text>Component of the ESCRT-0 complex composed of HSE1 and VPS27.</text>
</comment>
<comment type="subcellular location">
    <subcellularLocation>
        <location evidence="1">Endosome membrane</location>
        <topology evidence="1">Peripheral membrane protein</topology>
        <orientation evidence="1">Cytoplasmic side</orientation>
    </subcellularLocation>
</comment>
<comment type="domain">
    <text>The FYVE domain is involved in the binding to phosphatidylinositol 3-phosphate (PtdIns(3)P) which is required for the association to endosomal membranes.</text>
</comment>
<comment type="domain">
    <text evidence="1">Both IUM domains are necessary for efficient binding to ubiquitin.</text>
</comment>
<comment type="similarity">
    <text evidence="6">Belongs to the VPS27 family.</text>
</comment>
<name>VPS27_DEBHA</name>
<accession>Q6BSD6</accession>
<accession>B5RTG1</accession>
<gene>
    <name type="primary">VPS27</name>
    <name type="ordered locus">DEHA2D09636g</name>
</gene>
<keyword id="KW-0967">Endosome</keyword>
<keyword id="KW-0472">Membrane</keyword>
<keyword id="KW-0479">Metal-binding</keyword>
<keyword id="KW-1185">Reference proteome</keyword>
<keyword id="KW-0677">Repeat</keyword>
<keyword id="KW-0862">Zinc</keyword>
<keyword id="KW-0863">Zinc-finger</keyword>
<sequence>MSWFSGSTVPVADLESKINEATSESIPNGELDLAIALEITDLIRSKKIPPKQCMRSLKKRLTTTHSNPNLLTSTLKLVDLCVKNGGYHFLVELSSKEFIDYLVDYIFKIHYNTKDSYVIENEAKYKVGSFILSLIKDWTLVFENQTQLNYVERSYHQLMNQGYEFPESEVGGQLSNKFIDSEAPPDWIDSNECMICYNPFSLMNRKHHCRSCGGVYCQTHSSHNSPLVALGIMEPVRVCDNCYEKIKSKNSKHLSKVRQKKTPSQPTDEDLDDEDEQLRKAIELSLRETQVPVSKQIPPPRSPSPVVANNTGEEEDEEMKAAIAASLKEFEQQERMYKQQPVASQQGYQEPQSEFYRHILPFDQQDPSYQNQNPSQQPQMTPANHAEQYHLKPQVEDLSQQEEESINLFITLMNNIKSDPSKQANILYDSNLSELHGKIIQLKPKLNKSLRASIEKYETCLELNNKISTISRLYDQFLEAKLNQAYGNHTISSPYGGPNQSFQGPYPSQTSNEYVPYPVDQRVSSPQYQQSPPQFQNYSSPGLSQQPTGYNNYPSIGQASEPSNQPPASESMQNTSQNPQEPPPTSFYPSYYQESDSETTQTNQDNGTPPYYSSKKTSEGNRNEPEYPHQSTYPPQDLNGSFNQNAPSQPNYNPPLPTEPSYPPFEQDDDAEDHAAAKFPSINELNSEEQTTNTGGKDDNKVPSMPSMPQFGQPSQDTDRKSKLVEEPLIEL</sequence>
<dbReference type="EMBL" id="CR382136">
    <property type="protein sequence ID" value="CAR65646.1"/>
    <property type="molecule type" value="Genomic_DNA"/>
</dbReference>
<dbReference type="RefSeq" id="XP_002770291.1">
    <property type="nucleotide sequence ID" value="XM_002770245.1"/>
</dbReference>
<dbReference type="SMR" id="Q6BSD6"/>
<dbReference type="FunCoup" id="Q6BSD6">
    <property type="interactions" value="117"/>
</dbReference>
<dbReference type="STRING" id="284592.Q6BSD6"/>
<dbReference type="GeneID" id="8998503"/>
<dbReference type="KEGG" id="dha:DEHA2D09636g"/>
<dbReference type="VEuPathDB" id="FungiDB:DEHA2D09636g"/>
<dbReference type="eggNOG" id="KOG1818">
    <property type="taxonomic scope" value="Eukaryota"/>
</dbReference>
<dbReference type="HOGENOM" id="CLU_011862_2_0_1"/>
<dbReference type="InParanoid" id="Q6BSD6"/>
<dbReference type="OMA" id="DQQCSAK"/>
<dbReference type="OrthoDB" id="957735at2759"/>
<dbReference type="Proteomes" id="UP000000599">
    <property type="component" value="Chromosome D"/>
</dbReference>
<dbReference type="GO" id="GO:0010008">
    <property type="term" value="C:endosome membrane"/>
    <property type="evidence" value="ECO:0007669"/>
    <property type="project" value="UniProtKB-SubCell"/>
</dbReference>
<dbReference type="GO" id="GO:0033565">
    <property type="term" value="C:ESCRT-0 complex"/>
    <property type="evidence" value="ECO:0007669"/>
    <property type="project" value="TreeGrafter"/>
</dbReference>
<dbReference type="GO" id="GO:0032266">
    <property type="term" value="F:phosphatidylinositol-3-phosphate binding"/>
    <property type="evidence" value="ECO:0007669"/>
    <property type="project" value="UniProtKB-ARBA"/>
</dbReference>
<dbReference type="GO" id="GO:0043130">
    <property type="term" value="F:ubiquitin binding"/>
    <property type="evidence" value="ECO:0007669"/>
    <property type="project" value="InterPro"/>
</dbReference>
<dbReference type="GO" id="GO:0008270">
    <property type="term" value="F:zinc ion binding"/>
    <property type="evidence" value="ECO:0007669"/>
    <property type="project" value="UniProtKB-KW"/>
</dbReference>
<dbReference type="GO" id="GO:0006623">
    <property type="term" value="P:protein targeting to vacuole"/>
    <property type="evidence" value="ECO:0007669"/>
    <property type="project" value="TreeGrafter"/>
</dbReference>
<dbReference type="GO" id="GO:0043328">
    <property type="term" value="P:protein transport to vacuole involved in ubiquitin-dependent protein catabolic process via the multivesicular body sorting pathway"/>
    <property type="evidence" value="ECO:0007669"/>
    <property type="project" value="TreeGrafter"/>
</dbReference>
<dbReference type="CDD" id="cd21385">
    <property type="entry name" value="GAT_Vps27"/>
    <property type="match status" value="1"/>
</dbReference>
<dbReference type="CDD" id="cd16979">
    <property type="entry name" value="VHS_Vps27"/>
    <property type="match status" value="1"/>
</dbReference>
<dbReference type="Gene3D" id="1.20.5.1940">
    <property type="match status" value="1"/>
</dbReference>
<dbReference type="Gene3D" id="1.25.40.90">
    <property type="match status" value="1"/>
</dbReference>
<dbReference type="Gene3D" id="6.10.140.100">
    <property type="match status" value="1"/>
</dbReference>
<dbReference type="Gene3D" id="3.30.40.10">
    <property type="entry name" value="Zinc/RING finger domain, C3HC4 (zinc finger)"/>
    <property type="match status" value="1"/>
</dbReference>
<dbReference type="InterPro" id="IPR008942">
    <property type="entry name" value="ENTH_VHS"/>
</dbReference>
<dbReference type="InterPro" id="IPR017073">
    <property type="entry name" value="HGS/VPS27"/>
</dbReference>
<dbReference type="InterPro" id="IPR003903">
    <property type="entry name" value="UIM_dom"/>
</dbReference>
<dbReference type="InterPro" id="IPR002014">
    <property type="entry name" value="VHS_dom"/>
</dbReference>
<dbReference type="InterPro" id="IPR049425">
    <property type="entry name" value="Vps27_GAT-like"/>
</dbReference>
<dbReference type="InterPro" id="IPR000306">
    <property type="entry name" value="Znf_FYVE"/>
</dbReference>
<dbReference type="InterPro" id="IPR017455">
    <property type="entry name" value="Znf_FYVE-rel"/>
</dbReference>
<dbReference type="InterPro" id="IPR011011">
    <property type="entry name" value="Znf_FYVE_PHD"/>
</dbReference>
<dbReference type="InterPro" id="IPR013083">
    <property type="entry name" value="Znf_RING/FYVE/PHD"/>
</dbReference>
<dbReference type="PANTHER" id="PTHR47794">
    <property type="entry name" value="VACUOLAR PROTEIN SORTING-ASSOCIATED PROTEIN 27"/>
    <property type="match status" value="1"/>
</dbReference>
<dbReference type="PANTHER" id="PTHR47794:SF1">
    <property type="entry name" value="VACUOLAR PROTEIN SORTING-ASSOCIATED PROTEIN 27"/>
    <property type="match status" value="1"/>
</dbReference>
<dbReference type="Pfam" id="PF01363">
    <property type="entry name" value="FYVE"/>
    <property type="match status" value="1"/>
</dbReference>
<dbReference type="Pfam" id="PF02809">
    <property type="entry name" value="UIM"/>
    <property type="match status" value="2"/>
</dbReference>
<dbReference type="Pfam" id="PF00790">
    <property type="entry name" value="VHS"/>
    <property type="match status" value="1"/>
</dbReference>
<dbReference type="Pfam" id="PF21356">
    <property type="entry name" value="Vps27_GAT-like"/>
    <property type="match status" value="1"/>
</dbReference>
<dbReference type="PIRSF" id="PIRSF036956">
    <property type="entry name" value="Hrs_Vps27"/>
    <property type="match status" value="1"/>
</dbReference>
<dbReference type="SMART" id="SM00064">
    <property type="entry name" value="FYVE"/>
    <property type="match status" value="1"/>
</dbReference>
<dbReference type="SMART" id="SM00726">
    <property type="entry name" value="UIM"/>
    <property type="match status" value="2"/>
</dbReference>
<dbReference type="SMART" id="SM00288">
    <property type="entry name" value="VHS"/>
    <property type="match status" value="1"/>
</dbReference>
<dbReference type="SUPFAM" id="SSF48464">
    <property type="entry name" value="ENTH/VHS domain"/>
    <property type="match status" value="1"/>
</dbReference>
<dbReference type="SUPFAM" id="SSF57903">
    <property type="entry name" value="FYVE/PHD zinc finger"/>
    <property type="match status" value="1"/>
</dbReference>
<dbReference type="PROSITE" id="PS50330">
    <property type="entry name" value="UIM"/>
    <property type="match status" value="2"/>
</dbReference>
<dbReference type="PROSITE" id="PS50179">
    <property type="entry name" value="VHS"/>
    <property type="match status" value="1"/>
</dbReference>
<dbReference type="PROSITE" id="PS50178">
    <property type="entry name" value="ZF_FYVE"/>
    <property type="match status" value="1"/>
</dbReference>
<feature type="chain" id="PRO_0000292515" description="Vacuolar protein sorting-associated protein 27">
    <location>
        <begin position="1"/>
        <end position="732"/>
    </location>
</feature>
<feature type="domain" description="VHS" evidence="4">
    <location>
        <begin position="23"/>
        <end position="166"/>
    </location>
</feature>
<feature type="domain" description="UIM 1" evidence="3">
    <location>
        <begin position="273"/>
        <end position="292"/>
    </location>
</feature>
<feature type="domain" description="UIM 2" evidence="3">
    <location>
        <begin position="314"/>
        <end position="333"/>
    </location>
</feature>
<feature type="zinc finger region" description="FYVE-type; atypical" evidence="2">
    <location>
        <begin position="187"/>
        <end position="247"/>
    </location>
</feature>
<feature type="region of interest" description="Disordered" evidence="5">
    <location>
        <begin position="253"/>
        <end position="274"/>
    </location>
</feature>
<feature type="region of interest" description="Disordered" evidence="5">
    <location>
        <begin position="289"/>
        <end position="318"/>
    </location>
</feature>
<feature type="region of interest" description="Disordered" evidence="5">
    <location>
        <begin position="364"/>
        <end position="384"/>
    </location>
</feature>
<feature type="region of interest" description="Disordered" evidence="5">
    <location>
        <begin position="491"/>
        <end position="732"/>
    </location>
</feature>
<feature type="compositionally biased region" description="Low complexity" evidence="5">
    <location>
        <begin position="364"/>
        <end position="379"/>
    </location>
</feature>
<feature type="compositionally biased region" description="Polar residues" evidence="5">
    <location>
        <begin position="491"/>
        <end position="513"/>
    </location>
</feature>
<feature type="compositionally biased region" description="Low complexity" evidence="5">
    <location>
        <begin position="524"/>
        <end position="541"/>
    </location>
</feature>
<feature type="compositionally biased region" description="Polar residues" evidence="5">
    <location>
        <begin position="542"/>
        <end position="579"/>
    </location>
</feature>
<feature type="compositionally biased region" description="Polar residues" evidence="5">
    <location>
        <begin position="592"/>
        <end position="607"/>
    </location>
</feature>
<feature type="compositionally biased region" description="Basic and acidic residues" evidence="5">
    <location>
        <begin position="616"/>
        <end position="627"/>
    </location>
</feature>
<feature type="compositionally biased region" description="Polar residues" evidence="5">
    <location>
        <begin position="629"/>
        <end position="651"/>
    </location>
</feature>
<feature type="compositionally biased region" description="Pro residues" evidence="5">
    <location>
        <begin position="652"/>
        <end position="663"/>
    </location>
</feature>
<feature type="compositionally biased region" description="Polar residues" evidence="5">
    <location>
        <begin position="683"/>
        <end position="695"/>
    </location>
</feature>
<feature type="compositionally biased region" description="Basic and acidic residues" evidence="5">
    <location>
        <begin position="717"/>
        <end position="726"/>
    </location>
</feature>
<feature type="binding site" evidence="2">
    <location>
        <position position="193"/>
    </location>
    <ligand>
        <name>Zn(2+)</name>
        <dbReference type="ChEBI" id="CHEBI:29105"/>
        <label>1</label>
    </ligand>
</feature>
<feature type="binding site" evidence="2">
    <location>
        <position position="196"/>
    </location>
    <ligand>
        <name>Zn(2+)</name>
        <dbReference type="ChEBI" id="CHEBI:29105"/>
        <label>1</label>
    </ligand>
</feature>
<feature type="binding site" evidence="2">
    <location>
        <position position="209"/>
    </location>
    <ligand>
        <name>Zn(2+)</name>
        <dbReference type="ChEBI" id="CHEBI:29105"/>
        <label>2</label>
    </ligand>
</feature>
<feature type="binding site" evidence="2">
    <location>
        <position position="212"/>
    </location>
    <ligand>
        <name>Zn(2+)</name>
        <dbReference type="ChEBI" id="CHEBI:29105"/>
        <label>2</label>
    </ligand>
</feature>
<feature type="binding site" evidence="2">
    <location>
        <position position="217"/>
    </location>
    <ligand>
        <name>Zn(2+)</name>
        <dbReference type="ChEBI" id="CHEBI:29105"/>
        <label>1</label>
    </ligand>
</feature>
<feature type="binding site" evidence="2">
    <location>
        <position position="220"/>
    </location>
    <ligand>
        <name>Zn(2+)</name>
        <dbReference type="ChEBI" id="CHEBI:29105"/>
        <label>1</label>
    </ligand>
</feature>
<feature type="binding site" evidence="2">
    <location>
        <position position="239"/>
    </location>
    <ligand>
        <name>Zn(2+)</name>
        <dbReference type="ChEBI" id="CHEBI:29105"/>
        <label>2</label>
    </ligand>
</feature>
<feature type="binding site" evidence="2">
    <location>
        <position position="242"/>
    </location>
    <ligand>
        <name>Zn(2+)</name>
        <dbReference type="ChEBI" id="CHEBI:29105"/>
        <label>2</label>
    </ligand>
</feature>
<evidence type="ECO:0000250" key="1"/>
<evidence type="ECO:0000255" key="2">
    <source>
        <dbReference type="PROSITE-ProRule" id="PRU00091"/>
    </source>
</evidence>
<evidence type="ECO:0000255" key="3">
    <source>
        <dbReference type="PROSITE-ProRule" id="PRU00213"/>
    </source>
</evidence>
<evidence type="ECO:0000255" key="4">
    <source>
        <dbReference type="PROSITE-ProRule" id="PRU00218"/>
    </source>
</evidence>
<evidence type="ECO:0000256" key="5">
    <source>
        <dbReference type="SAM" id="MobiDB-lite"/>
    </source>
</evidence>
<evidence type="ECO:0000305" key="6"/>
<reference key="1">
    <citation type="journal article" date="2004" name="Nature">
        <title>Genome evolution in yeasts.</title>
        <authorList>
            <person name="Dujon B."/>
            <person name="Sherman D."/>
            <person name="Fischer G."/>
            <person name="Durrens P."/>
            <person name="Casaregola S."/>
            <person name="Lafontaine I."/>
            <person name="de Montigny J."/>
            <person name="Marck C."/>
            <person name="Neuveglise C."/>
            <person name="Talla E."/>
            <person name="Goffard N."/>
            <person name="Frangeul L."/>
            <person name="Aigle M."/>
            <person name="Anthouard V."/>
            <person name="Babour A."/>
            <person name="Barbe V."/>
            <person name="Barnay S."/>
            <person name="Blanchin S."/>
            <person name="Beckerich J.-M."/>
            <person name="Beyne E."/>
            <person name="Bleykasten C."/>
            <person name="Boisrame A."/>
            <person name="Boyer J."/>
            <person name="Cattolico L."/>
            <person name="Confanioleri F."/>
            <person name="de Daruvar A."/>
            <person name="Despons L."/>
            <person name="Fabre E."/>
            <person name="Fairhead C."/>
            <person name="Ferry-Dumazet H."/>
            <person name="Groppi A."/>
            <person name="Hantraye F."/>
            <person name="Hennequin C."/>
            <person name="Jauniaux N."/>
            <person name="Joyet P."/>
            <person name="Kachouri R."/>
            <person name="Kerrest A."/>
            <person name="Koszul R."/>
            <person name="Lemaire M."/>
            <person name="Lesur I."/>
            <person name="Ma L."/>
            <person name="Muller H."/>
            <person name="Nicaud J.-M."/>
            <person name="Nikolski M."/>
            <person name="Oztas S."/>
            <person name="Ozier-Kalogeropoulos O."/>
            <person name="Pellenz S."/>
            <person name="Potier S."/>
            <person name="Richard G.-F."/>
            <person name="Straub M.-L."/>
            <person name="Suleau A."/>
            <person name="Swennen D."/>
            <person name="Tekaia F."/>
            <person name="Wesolowski-Louvel M."/>
            <person name="Westhof E."/>
            <person name="Wirth B."/>
            <person name="Zeniou-Meyer M."/>
            <person name="Zivanovic Y."/>
            <person name="Bolotin-Fukuhara M."/>
            <person name="Thierry A."/>
            <person name="Bouchier C."/>
            <person name="Caudron B."/>
            <person name="Scarpelli C."/>
            <person name="Gaillardin C."/>
            <person name="Weissenbach J."/>
            <person name="Wincker P."/>
            <person name="Souciet J.-L."/>
        </authorList>
    </citation>
    <scope>NUCLEOTIDE SEQUENCE [LARGE SCALE GENOMIC DNA]</scope>
    <source>
        <strain>ATCC 36239 / CBS 767 / BCRC 21394 / JCM 1990 / NBRC 0083 / IGC 2968</strain>
    </source>
</reference>